<dbReference type="EC" id="2.7.11.1"/>
<dbReference type="EMBL" id="AL138659">
    <property type="protein sequence ID" value="CAB75470.1"/>
    <property type="molecule type" value="Genomic_DNA"/>
</dbReference>
<dbReference type="EMBL" id="CP002686">
    <property type="protein sequence ID" value="AEE79959.1"/>
    <property type="molecule type" value="Genomic_DNA"/>
</dbReference>
<dbReference type="PIR" id="T49314">
    <property type="entry name" value="T49314"/>
</dbReference>
<dbReference type="RefSeq" id="NP_191532.1">
    <property type="nucleotide sequence ID" value="NM_115835.2"/>
</dbReference>
<dbReference type="SMR" id="Q9LEA3"/>
<dbReference type="BioGRID" id="10456">
    <property type="interactions" value="10"/>
</dbReference>
<dbReference type="IntAct" id="Q9LEA3">
    <property type="interactions" value="10"/>
</dbReference>
<dbReference type="STRING" id="3702.Q9LEA3"/>
<dbReference type="GlyCosmos" id="Q9LEA3">
    <property type="glycosylation" value="4 sites, No reported glycans"/>
</dbReference>
<dbReference type="GlyGen" id="Q9LEA3">
    <property type="glycosylation" value="4 sites"/>
</dbReference>
<dbReference type="PaxDb" id="3702-AT3G59730.1"/>
<dbReference type="EnsemblPlants" id="AT3G59730.1">
    <property type="protein sequence ID" value="AT3G59730.1"/>
    <property type="gene ID" value="AT3G59730"/>
</dbReference>
<dbReference type="GeneID" id="825142"/>
<dbReference type="Gramene" id="AT3G59730.1">
    <property type="protein sequence ID" value="AT3G59730.1"/>
    <property type="gene ID" value="AT3G59730"/>
</dbReference>
<dbReference type="KEGG" id="ath:AT3G59730"/>
<dbReference type="Araport" id="AT3G59730"/>
<dbReference type="TAIR" id="AT3G59730">
    <property type="gene designation" value="LECRK-V.6"/>
</dbReference>
<dbReference type="HOGENOM" id="CLU_000288_62_3_1"/>
<dbReference type="InParanoid" id="Q9LEA3"/>
<dbReference type="OMA" id="MAFVICP"/>
<dbReference type="PhylomeDB" id="Q9LEA3"/>
<dbReference type="PRO" id="PR:Q9LEA3"/>
<dbReference type="Proteomes" id="UP000006548">
    <property type="component" value="Chromosome 3"/>
</dbReference>
<dbReference type="ExpressionAtlas" id="Q9LEA3">
    <property type="expression patterns" value="baseline and differential"/>
</dbReference>
<dbReference type="GO" id="GO:0005886">
    <property type="term" value="C:plasma membrane"/>
    <property type="evidence" value="ECO:0000250"/>
    <property type="project" value="UniProtKB"/>
</dbReference>
<dbReference type="GO" id="GO:0005524">
    <property type="term" value="F:ATP binding"/>
    <property type="evidence" value="ECO:0007669"/>
    <property type="project" value="UniProtKB-KW"/>
</dbReference>
<dbReference type="GO" id="GO:0030246">
    <property type="term" value="F:carbohydrate binding"/>
    <property type="evidence" value="ECO:0007669"/>
    <property type="project" value="UniProtKB-KW"/>
</dbReference>
<dbReference type="GO" id="GO:0106310">
    <property type="term" value="F:protein serine kinase activity"/>
    <property type="evidence" value="ECO:0007669"/>
    <property type="project" value="RHEA"/>
</dbReference>
<dbReference type="GO" id="GO:0004674">
    <property type="term" value="F:protein serine/threonine kinase activity"/>
    <property type="evidence" value="ECO:0007669"/>
    <property type="project" value="UniProtKB-KW"/>
</dbReference>
<dbReference type="CDD" id="cd06899">
    <property type="entry name" value="lectin_legume_LecRK_Arcelin_ConA"/>
    <property type="match status" value="1"/>
</dbReference>
<dbReference type="FunFam" id="1.10.510.10:FF:001731">
    <property type="match status" value="1"/>
</dbReference>
<dbReference type="FunFam" id="2.60.120.200:FF:000086">
    <property type="entry name" value="L-type lectin-domain containing receptor kinase S.4"/>
    <property type="match status" value="1"/>
</dbReference>
<dbReference type="FunFam" id="3.30.200.20:FF:000112">
    <property type="entry name" value="Lectin-domain containing receptor kinase A4.3"/>
    <property type="match status" value="1"/>
</dbReference>
<dbReference type="Gene3D" id="2.60.120.200">
    <property type="match status" value="1"/>
</dbReference>
<dbReference type="Gene3D" id="3.30.200.20">
    <property type="entry name" value="Phosphorylase Kinase, domain 1"/>
    <property type="match status" value="1"/>
</dbReference>
<dbReference type="Gene3D" id="1.10.510.10">
    <property type="entry name" value="Transferase(Phosphotransferase) domain 1"/>
    <property type="match status" value="1"/>
</dbReference>
<dbReference type="InterPro" id="IPR013320">
    <property type="entry name" value="ConA-like_dom_sf"/>
</dbReference>
<dbReference type="InterPro" id="IPR011009">
    <property type="entry name" value="Kinase-like_dom_sf"/>
</dbReference>
<dbReference type="InterPro" id="IPR050528">
    <property type="entry name" value="L-type_Lectin-RKs"/>
</dbReference>
<dbReference type="InterPro" id="IPR001220">
    <property type="entry name" value="Legume_lectin_dom"/>
</dbReference>
<dbReference type="InterPro" id="IPR000719">
    <property type="entry name" value="Prot_kinase_dom"/>
</dbReference>
<dbReference type="InterPro" id="IPR017441">
    <property type="entry name" value="Protein_kinase_ATP_BS"/>
</dbReference>
<dbReference type="InterPro" id="IPR008271">
    <property type="entry name" value="Ser/Thr_kinase_AS"/>
</dbReference>
<dbReference type="PANTHER" id="PTHR27007">
    <property type="match status" value="1"/>
</dbReference>
<dbReference type="Pfam" id="PF00139">
    <property type="entry name" value="Lectin_legB"/>
    <property type="match status" value="1"/>
</dbReference>
<dbReference type="Pfam" id="PF00069">
    <property type="entry name" value="Pkinase"/>
    <property type="match status" value="1"/>
</dbReference>
<dbReference type="SMART" id="SM00220">
    <property type="entry name" value="S_TKc"/>
    <property type="match status" value="1"/>
</dbReference>
<dbReference type="SUPFAM" id="SSF49899">
    <property type="entry name" value="Concanavalin A-like lectins/glucanases"/>
    <property type="match status" value="1"/>
</dbReference>
<dbReference type="SUPFAM" id="SSF56112">
    <property type="entry name" value="Protein kinase-like (PK-like)"/>
    <property type="match status" value="1"/>
</dbReference>
<dbReference type="PROSITE" id="PS00107">
    <property type="entry name" value="PROTEIN_KINASE_ATP"/>
    <property type="match status" value="1"/>
</dbReference>
<dbReference type="PROSITE" id="PS50011">
    <property type="entry name" value="PROTEIN_KINASE_DOM"/>
    <property type="match status" value="1"/>
</dbReference>
<dbReference type="PROSITE" id="PS00108">
    <property type="entry name" value="PROTEIN_KINASE_ST"/>
    <property type="match status" value="1"/>
</dbReference>
<accession>Q9LEA3</accession>
<evidence type="ECO:0000250" key="1"/>
<evidence type="ECO:0000255" key="2"/>
<evidence type="ECO:0000255" key="3">
    <source>
        <dbReference type="PROSITE-ProRule" id="PRU00159"/>
    </source>
</evidence>
<evidence type="ECO:0000255" key="4">
    <source>
        <dbReference type="PROSITE-ProRule" id="PRU10027"/>
    </source>
</evidence>
<evidence type="ECO:0000305" key="5"/>
<sequence length="523" mass="59313">MFSEVKVLQIVLVQWLTLFSFTYNSHGTYILDGSAVFNENSYLVLTNTTKHSYGQAFDNTTFEMKDQSFSINFFFAIVPEHKQQGSHGMTFAFSPTRGLPGASSDQYLGLFNKTNNGKTSNHVIAIELDIHKDEEFEDIDDNHVGININGLRSVASASAGYYDDNDGSFKNLSLISGKLMRLSIVYSHPDTKLDVTLCPAEFLVPPRKPLLSLNRDLSQYVLKHMHIGFTASTGSIRALHYMVLVYTYPEAVYQPLEFGRVPTLPPYPKKPSDRLRTVLAVCLTLALFAVFLASGIGFVFYLRHKKVKEVLEEWEIQCGPHRFSYKELFNATKGFKEKQLLGKGGFGQVYKGTLPGSDAEIAVKRTSHDSRQGMSEFLAEISTIGRLRHPNLVRLLGYCKHKENLYLVYDFMPNGSLDKYLNRSNTNENQERLTWEQRFKIIKDVASALLHLHQEWVQVIIHRDIKPANVLIDHDMNARLGDFGLAKLYDQGFDPQTSRVAGTFGYIAPEFLRTGRAVRVKFF</sequence>
<organism>
    <name type="scientific">Arabidopsis thaliana</name>
    <name type="common">Mouse-ear cress</name>
    <dbReference type="NCBI Taxonomy" id="3702"/>
    <lineage>
        <taxon>Eukaryota</taxon>
        <taxon>Viridiplantae</taxon>
        <taxon>Streptophyta</taxon>
        <taxon>Embryophyta</taxon>
        <taxon>Tracheophyta</taxon>
        <taxon>Spermatophyta</taxon>
        <taxon>Magnoliopsida</taxon>
        <taxon>eudicotyledons</taxon>
        <taxon>Gunneridae</taxon>
        <taxon>Pentapetalae</taxon>
        <taxon>rosids</taxon>
        <taxon>malvids</taxon>
        <taxon>Brassicales</taxon>
        <taxon>Brassicaceae</taxon>
        <taxon>Camelineae</taxon>
        <taxon>Arabidopsis</taxon>
    </lineage>
</organism>
<comment type="catalytic activity">
    <reaction>
        <text>L-seryl-[protein] + ATP = O-phospho-L-seryl-[protein] + ADP + H(+)</text>
        <dbReference type="Rhea" id="RHEA:17989"/>
        <dbReference type="Rhea" id="RHEA-COMP:9863"/>
        <dbReference type="Rhea" id="RHEA-COMP:11604"/>
        <dbReference type="ChEBI" id="CHEBI:15378"/>
        <dbReference type="ChEBI" id="CHEBI:29999"/>
        <dbReference type="ChEBI" id="CHEBI:30616"/>
        <dbReference type="ChEBI" id="CHEBI:83421"/>
        <dbReference type="ChEBI" id="CHEBI:456216"/>
        <dbReference type="EC" id="2.7.11.1"/>
    </reaction>
</comment>
<comment type="catalytic activity">
    <reaction>
        <text>L-threonyl-[protein] + ATP = O-phospho-L-threonyl-[protein] + ADP + H(+)</text>
        <dbReference type="Rhea" id="RHEA:46608"/>
        <dbReference type="Rhea" id="RHEA-COMP:11060"/>
        <dbReference type="Rhea" id="RHEA-COMP:11605"/>
        <dbReference type="ChEBI" id="CHEBI:15378"/>
        <dbReference type="ChEBI" id="CHEBI:30013"/>
        <dbReference type="ChEBI" id="CHEBI:30616"/>
        <dbReference type="ChEBI" id="CHEBI:61977"/>
        <dbReference type="ChEBI" id="CHEBI:456216"/>
        <dbReference type="EC" id="2.7.11.1"/>
    </reaction>
</comment>
<comment type="subcellular location">
    <subcellularLocation>
        <location evidence="1">Cell membrane</location>
        <topology evidence="1">Single-pass type I membrane protein</topology>
    </subcellularLocation>
</comment>
<comment type="similarity">
    <text evidence="5">In the C-terminal section; belongs to the protein kinase superfamily. Ser/Thr protein kinase family.</text>
</comment>
<comment type="similarity">
    <text evidence="5">In the N-terminal section; belongs to the leguminous lectin family.</text>
</comment>
<comment type="caution">
    <text evidence="5">The C-terminal part of the kinase domain is truncated.</text>
</comment>
<reference key="1">
    <citation type="journal article" date="2000" name="Nature">
        <title>Sequence and analysis of chromosome 3 of the plant Arabidopsis thaliana.</title>
        <authorList>
            <person name="Salanoubat M."/>
            <person name="Lemcke K."/>
            <person name="Rieger M."/>
            <person name="Ansorge W."/>
            <person name="Unseld M."/>
            <person name="Fartmann B."/>
            <person name="Valle G."/>
            <person name="Bloecker H."/>
            <person name="Perez-Alonso M."/>
            <person name="Obermaier B."/>
            <person name="Delseny M."/>
            <person name="Boutry M."/>
            <person name="Grivell L.A."/>
            <person name="Mache R."/>
            <person name="Puigdomenech P."/>
            <person name="De Simone V."/>
            <person name="Choisne N."/>
            <person name="Artiguenave F."/>
            <person name="Robert C."/>
            <person name="Brottier P."/>
            <person name="Wincker P."/>
            <person name="Cattolico L."/>
            <person name="Weissenbach J."/>
            <person name="Saurin W."/>
            <person name="Quetier F."/>
            <person name="Schaefer M."/>
            <person name="Mueller-Auer S."/>
            <person name="Gabel C."/>
            <person name="Fuchs M."/>
            <person name="Benes V."/>
            <person name="Wurmbach E."/>
            <person name="Drzonek H."/>
            <person name="Erfle H."/>
            <person name="Jordan N."/>
            <person name="Bangert S."/>
            <person name="Wiedelmann R."/>
            <person name="Kranz H."/>
            <person name="Voss H."/>
            <person name="Holland R."/>
            <person name="Brandt P."/>
            <person name="Nyakatura G."/>
            <person name="Vezzi A."/>
            <person name="D'Angelo M."/>
            <person name="Pallavicini A."/>
            <person name="Toppo S."/>
            <person name="Simionati B."/>
            <person name="Conrad A."/>
            <person name="Hornischer K."/>
            <person name="Kauer G."/>
            <person name="Loehnert T.-H."/>
            <person name="Nordsiek G."/>
            <person name="Reichelt J."/>
            <person name="Scharfe M."/>
            <person name="Schoen O."/>
            <person name="Bargues M."/>
            <person name="Terol J."/>
            <person name="Climent J."/>
            <person name="Navarro P."/>
            <person name="Collado C."/>
            <person name="Perez-Perez A."/>
            <person name="Ottenwaelder B."/>
            <person name="Duchemin D."/>
            <person name="Cooke R."/>
            <person name="Laudie M."/>
            <person name="Berger-Llauro C."/>
            <person name="Purnelle B."/>
            <person name="Masuy D."/>
            <person name="de Haan M."/>
            <person name="Maarse A.C."/>
            <person name="Alcaraz J.-P."/>
            <person name="Cottet A."/>
            <person name="Casacuberta E."/>
            <person name="Monfort A."/>
            <person name="Argiriou A."/>
            <person name="Flores M."/>
            <person name="Liguori R."/>
            <person name="Vitale D."/>
            <person name="Mannhaupt G."/>
            <person name="Haase D."/>
            <person name="Schoof H."/>
            <person name="Rudd S."/>
            <person name="Zaccaria P."/>
            <person name="Mewes H.-W."/>
            <person name="Mayer K.F.X."/>
            <person name="Kaul S."/>
            <person name="Town C.D."/>
            <person name="Koo H.L."/>
            <person name="Tallon L.J."/>
            <person name="Jenkins J."/>
            <person name="Rooney T."/>
            <person name="Rizzo M."/>
            <person name="Walts A."/>
            <person name="Utterback T."/>
            <person name="Fujii C.Y."/>
            <person name="Shea T.P."/>
            <person name="Creasy T.H."/>
            <person name="Haas B."/>
            <person name="Maiti R."/>
            <person name="Wu D."/>
            <person name="Peterson J."/>
            <person name="Van Aken S."/>
            <person name="Pai G."/>
            <person name="Militscher J."/>
            <person name="Sellers P."/>
            <person name="Gill J.E."/>
            <person name="Feldblyum T.V."/>
            <person name="Preuss D."/>
            <person name="Lin X."/>
            <person name="Nierman W.C."/>
            <person name="Salzberg S.L."/>
            <person name="White O."/>
            <person name="Venter J.C."/>
            <person name="Fraser C.M."/>
            <person name="Kaneko T."/>
            <person name="Nakamura Y."/>
            <person name="Sato S."/>
            <person name="Kato T."/>
            <person name="Asamizu E."/>
            <person name="Sasamoto S."/>
            <person name="Kimura T."/>
            <person name="Idesawa K."/>
            <person name="Kawashima K."/>
            <person name="Kishida Y."/>
            <person name="Kiyokawa C."/>
            <person name="Kohara M."/>
            <person name="Matsumoto M."/>
            <person name="Matsuno A."/>
            <person name="Muraki A."/>
            <person name="Nakayama S."/>
            <person name="Nakazaki N."/>
            <person name="Shinpo S."/>
            <person name="Takeuchi C."/>
            <person name="Wada T."/>
            <person name="Watanabe A."/>
            <person name="Yamada M."/>
            <person name="Yasuda M."/>
            <person name="Tabata S."/>
        </authorList>
    </citation>
    <scope>NUCLEOTIDE SEQUENCE [LARGE SCALE GENOMIC DNA]</scope>
    <source>
        <strain>cv. Columbia</strain>
    </source>
</reference>
<reference key="2">
    <citation type="journal article" date="2017" name="Plant J.">
        <title>Araport11: a complete reannotation of the Arabidopsis thaliana reference genome.</title>
        <authorList>
            <person name="Cheng C.Y."/>
            <person name="Krishnakumar V."/>
            <person name="Chan A.P."/>
            <person name="Thibaud-Nissen F."/>
            <person name="Schobel S."/>
            <person name="Town C.D."/>
        </authorList>
    </citation>
    <scope>GENOME REANNOTATION</scope>
    <source>
        <strain>cv. Columbia</strain>
    </source>
</reference>
<reference key="3">
    <citation type="journal article" date="1999" name="Plant Mol. Biol.">
        <title>Characterization of the Arabidopsis lecRK-a genes: members of a superfamily encoding putative receptors with an extracellular domain homologous to legume lectins.</title>
        <authorList>
            <person name="Herve C."/>
            <person name="Serres J."/>
            <person name="Dabos P."/>
            <person name="Canut H."/>
            <person name="Barre A."/>
            <person name="Rouge P."/>
            <person name="Lescure B."/>
        </authorList>
    </citation>
    <scope>GENE FAMILY</scope>
</reference>
<reference key="4">
    <citation type="journal article" date="2002" name="Crit. Rev. Plant Sci.">
        <title>Lectin receptor kinases in plants.</title>
        <authorList>
            <person name="Barre A."/>
            <person name="Herve C."/>
            <person name="Lescure B."/>
            <person name="Rouge P."/>
        </authorList>
    </citation>
    <scope>GENE FAMILY</scope>
</reference>
<reference key="5">
    <citation type="journal article" date="2009" name="J. Exp. Bot.">
        <title>Arabidopsis L-type lectin receptor kinases: phylogeny, classification, and expression profiles.</title>
        <authorList>
            <person name="Bouwmeester K."/>
            <person name="Govers F."/>
        </authorList>
    </citation>
    <scope>GENE FAMILY</scope>
    <scope>NOMENCLATURE</scope>
</reference>
<protein>
    <recommendedName>
        <fullName>Putative L-type lectin-domain containing receptor kinase V.6</fullName>
        <shortName>Arabidopsis thaliana lectin-receptor kinase a2</shortName>
        <shortName>AthlecRK-a2</shortName>
        <shortName>LecRK-V.6</shortName>
        <ecNumber>2.7.11.1</ecNumber>
    </recommendedName>
</protein>
<name>LRK56_ARATH</name>
<feature type="signal peptide" evidence="2">
    <location>
        <begin position="1"/>
        <end position="27"/>
    </location>
</feature>
<feature type="chain" id="PRO_0000403094" description="Putative L-type lectin-domain containing receptor kinase V.6">
    <location>
        <begin position="28"/>
        <end position="523"/>
    </location>
</feature>
<feature type="topological domain" description="Extracellular" evidence="2">
    <location>
        <begin position="28"/>
        <end position="279"/>
    </location>
</feature>
<feature type="transmembrane region" description="Helical" evidence="2">
    <location>
        <begin position="280"/>
        <end position="300"/>
    </location>
</feature>
<feature type="topological domain" description="Cytoplasmic" evidence="2">
    <location>
        <begin position="301"/>
        <end position="523"/>
    </location>
</feature>
<feature type="domain" description="Protein kinase" evidence="3">
    <location>
        <begin position="335"/>
        <end position="523"/>
    </location>
</feature>
<feature type="region of interest" description="Legume-lectin like">
    <location>
        <begin position="28"/>
        <end position="242"/>
    </location>
</feature>
<feature type="active site" description="Proton acceptor" evidence="3 4">
    <location>
        <position position="464"/>
    </location>
</feature>
<feature type="binding site" evidence="3">
    <location>
        <begin position="341"/>
        <end position="349"/>
    </location>
    <ligand>
        <name>ATP</name>
        <dbReference type="ChEBI" id="CHEBI:30616"/>
    </ligand>
</feature>
<feature type="binding site" evidence="3">
    <location>
        <position position="364"/>
    </location>
    <ligand>
        <name>ATP</name>
        <dbReference type="ChEBI" id="CHEBI:30616"/>
    </ligand>
</feature>
<feature type="glycosylation site" description="N-linked (GlcNAc...) asparagine" evidence="2">
    <location>
        <position position="47"/>
    </location>
</feature>
<feature type="glycosylation site" description="N-linked (GlcNAc...) asparagine" evidence="2">
    <location>
        <position position="59"/>
    </location>
</feature>
<feature type="glycosylation site" description="N-linked (GlcNAc...) asparagine" evidence="2">
    <location>
        <position position="112"/>
    </location>
</feature>
<feature type="glycosylation site" description="N-linked (GlcNAc...) asparagine" evidence="2">
    <location>
        <position position="171"/>
    </location>
</feature>
<proteinExistence type="inferred from homology"/>
<keyword id="KW-0067">ATP-binding</keyword>
<keyword id="KW-1003">Cell membrane</keyword>
<keyword id="KW-0325">Glycoprotein</keyword>
<keyword id="KW-0418">Kinase</keyword>
<keyword id="KW-0430">Lectin</keyword>
<keyword id="KW-0472">Membrane</keyword>
<keyword id="KW-0547">Nucleotide-binding</keyword>
<keyword id="KW-0675">Receptor</keyword>
<keyword id="KW-1185">Reference proteome</keyword>
<keyword id="KW-0723">Serine/threonine-protein kinase</keyword>
<keyword id="KW-0732">Signal</keyword>
<keyword id="KW-0808">Transferase</keyword>
<keyword id="KW-0812">Transmembrane</keyword>
<keyword id="KW-1133">Transmembrane helix</keyword>
<gene>
    <name type="primary">LECRK56</name>
    <name type="synonym">LECRKA2</name>
    <name type="ordered locus">At3g59730</name>
    <name type="ORF">T16L24.280</name>
</gene>